<reference key="1">
    <citation type="journal article" date="1995" name="Science">
        <title>Whole-genome random sequencing and assembly of Haemophilus influenzae Rd.</title>
        <authorList>
            <person name="Fleischmann R.D."/>
            <person name="Adams M.D."/>
            <person name="White O."/>
            <person name="Clayton R.A."/>
            <person name="Kirkness E.F."/>
            <person name="Kerlavage A.R."/>
            <person name="Bult C.J."/>
            <person name="Tomb J.-F."/>
            <person name="Dougherty B.A."/>
            <person name="Merrick J.M."/>
            <person name="McKenney K."/>
            <person name="Sutton G.G."/>
            <person name="FitzHugh W."/>
            <person name="Fields C.A."/>
            <person name="Gocayne J.D."/>
            <person name="Scott J.D."/>
            <person name="Shirley R."/>
            <person name="Liu L.-I."/>
            <person name="Glodek A."/>
            <person name="Kelley J.M."/>
            <person name="Weidman J.F."/>
            <person name="Phillips C.A."/>
            <person name="Spriggs T."/>
            <person name="Hedblom E."/>
            <person name="Cotton M.D."/>
            <person name="Utterback T.R."/>
            <person name="Hanna M.C."/>
            <person name="Nguyen D.T."/>
            <person name="Saudek D.M."/>
            <person name="Brandon R.C."/>
            <person name="Fine L.D."/>
            <person name="Fritchman J.L."/>
            <person name="Fuhrmann J.L."/>
            <person name="Geoghagen N.S.M."/>
            <person name="Gnehm C.L."/>
            <person name="McDonald L.A."/>
            <person name="Small K.V."/>
            <person name="Fraser C.M."/>
            <person name="Smith H.O."/>
            <person name="Venter J.C."/>
        </authorList>
    </citation>
    <scope>NUCLEOTIDE SEQUENCE [LARGE SCALE GENOMIC DNA]</scope>
    <source>
        <strain>ATCC 51907 / DSM 11121 / KW20 / Rd</strain>
    </source>
</reference>
<organism>
    <name type="scientific">Haemophilus influenzae (strain ATCC 51907 / DSM 11121 / KW20 / Rd)</name>
    <dbReference type="NCBI Taxonomy" id="71421"/>
    <lineage>
        <taxon>Bacteria</taxon>
        <taxon>Pseudomonadati</taxon>
        <taxon>Pseudomonadota</taxon>
        <taxon>Gammaproteobacteria</taxon>
        <taxon>Pasteurellales</taxon>
        <taxon>Pasteurellaceae</taxon>
        <taxon>Haemophilus</taxon>
    </lineage>
</organism>
<evidence type="ECO:0000250" key="1"/>
<evidence type="ECO:0000305" key="2"/>
<keyword id="KW-0028">Amino-acid biosynthesis</keyword>
<keyword id="KW-0963">Cytoplasm</keyword>
<keyword id="KW-0368">Histidine biosynthesis</keyword>
<keyword id="KW-0413">Isomerase</keyword>
<keyword id="KW-1185">Reference proteome</keyword>
<gene>
    <name type="primary">hisA</name>
    <name type="ordered locus">HI_0473</name>
</gene>
<comment type="catalytic activity">
    <reaction>
        <text>1-(5-phospho-beta-D-ribosyl)-5-[(5-phospho-beta-D-ribosylamino)methylideneamino]imidazole-4-carboxamide = 5-[(5-phospho-1-deoxy-D-ribulos-1-ylimino)methylamino]-1-(5-phospho-beta-D-ribosyl)imidazole-4-carboxamide</text>
        <dbReference type="Rhea" id="RHEA:15469"/>
        <dbReference type="ChEBI" id="CHEBI:58435"/>
        <dbReference type="ChEBI" id="CHEBI:58525"/>
        <dbReference type="EC" id="5.3.1.16"/>
    </reaction>
</comment>
<comment type="pathway">
    <text>Amino-acid biosynthesis; L-histidine biosynthesis; L-histidine from 5-phospho-alpha-D-ribose 1-diphosphate: step 4/9.</text>
</comment>
<comment type="subcellular location">
    <subcellularLocation>
        <location evidence="1">Cytoplasm</location>
    </subcellularLocation>
</comment>
<comment type="similarity">
    <text evidence="2">Belongs to the HisA/HisF family.</text>
</comment>
<sequence>MKQSIIIPALDLINGQVVRLHQGDYAKQTTYSDNPIKQFDNYVRQGAKQLHLVDLTGAKNPQSRQTALIGKIVEATQCKVQVGGGIRTEQDVADLLAVGANRVVIGSTAVTHRSMVKNWFIKYGAEKFVLALDVNINASGQKIVAISGWQEESGVLLETLIEDFQTVGLQQVLCTDISRDGTLTGSNIGLYQEICEKYPPIQFQSSGGIGSLADIEALKGTGVSGVIVGRALLEGKFTLSEAIKCWQNG</sequence>
<protein>
    <recommendedName>
        <fullName>1-(5-phosphoribosyl)-5-[(5-phosphoribosylamino)methylideneamino] imidazole-4-carboxamide isomerase</fullName>
        <ecNumber>5.3.1.16</ecNumber>
    </recommendedName>
    <alternativeName>
        <fullName>Phosphoribosylformimino-5-aminoimidazole carboxamide ribotide isomerase</fullName>
    </alternativeName>
</protein>
<feature type="chain" id="PRO_0000142010" description="1-(5-phosphoribosyl)-5-[(5-phosphoribosylamino)methylideneamino] imidazole-4-carboxamide isomerase">
    <location>
        <begin position="1"/>
        <end position="249"/>
    </location>
</feature>
<feature type="active site" description="Proton acceptor" evidence="1">
    <location>
        <position position="11"/>
    </location>
</feature>
<feature type="active site" description="Proton donor" evidence="1">
    <location>
        <position position="133"/>
    </location>
</feature>
<proteinExistence type="inferred from homology"/>
<name>HIS4_HAEIN</name>
<dbReference type="EC" id="5.3.1.16"/>
<dbReference type="EMBL" id="L42023">
    <property type="protein sequence ID" value="AAC22132.1"/>
    <property type="molecule type" value="Genomic_DNA"/>
</dbReference>
<dbReference type="PIR" id="H64070">
    <property type="entry name" value="H64070"/>
</dbReference>
<dbReference type="RefSeq" id="NP_438634.1">
    <property type="nucleotide sequence ID" value="NC_000907.1"/>
</dbReference>
<dbReference type="SMR" id="P44435"/>
<dbReference type="STRING" id="71421.HI_0473"/>
<dbReference type="EnsemblBacteria" id="AAC22132">
    <property type="protein sequence ID" value="AAC22132"/>
    <property type="gene ID" value="HI_0473"/>
</dbReference>
<dbReference type="KEGG" id="hin:HI_0473"/>
<dbReference type="PATRIC" id="fig|71421.8.peg.493"/>
<dbReference type="eggNOG" id="COG0106">
    <property type="taxonomic scope" value="Bacteria"/>
</dbReference>
<dbReference type="HOGENOM" id="CLU_048577_1_2_6"/>
<dbReference type="OrthoDB" id="9807749at2"/>
<dbReference type="PhylomeDB" id="P44435"/>
<dbReference type="BioCyc" id="HINF71421:G1GJ1-489-MONOMER"/>
<dbReference type="UniPathway" id="UPA00031">
    <property type="reaction ID" value="UER00009"/>
</dbReference>
<dbReference type="Proteomes" id="UP000000579">
    <property type="component" value="Chromosome"/>
</dbReference>
<dbReference type="GO" id="GO:0005737">
    <property type="term" value="C:cytoplasm"/>
    <property type="evidence" value="ECO:0000318"/>
    <property type="project" value="GO_Central"/>
</dbReference>
<dbReference type="GO" id="GO:0003949">
    <property type="term" value="F:1-(5-phosphoribosyl)-5-[(5-phosphoribosylamino)methylideneamino]imidazole-4-carboxamide isomerase activity"/>
    <property type="evidence" value="ECO:0000318"/>
    <property type="project" value="GO_Central"/>
</dbReference>
<dbReference type="GO" id="GO:0000105">
    <property type="term" value="P:L-histidine biosynthetic process"/>
    <property type="evidence" value="ECO:0000318"/>
    <property type="project" value="GO_Central"/>
</dbReference>
<dbReference type="CDD" id="cd04732">
    <property type="entry name" value="HisA"/>
    <property type="match status" value="1"/>
</dbReference>
<dbReference type="FunFam" id="3.20.20.70:FF:000009">
    <property type="entry name" value="1-(5-phosphoribosyl)-5-[(5-phosphoribosylamino)methylideneamino] imidazole-4-carboxamide isomerase"/>
    <property type="match status" value="1"/>
</dbReference>
<dbReference type="Gene3D" id="3.20.20.70">
    <property type="entry name" value="Aldolase class I"/>
    <property type="match status" value="1"/>
</dbReference>
<dbReference type="HAMAP" id="MF_01014">
    <property type="entry name" value="HisA"/>
    <property type="match status" value="1"/>
</dbReference>
<dbReference type="InterPro" id="IPR013785">
    <property type="entry name" value="Aldolase_TIM"/>
</dbReference>
<dbReference type="InterPro" id="IPR006062">
    <property type="entry name" value="His_biosynth"/>
</dbReference>
<dbReference type="InterPro" id="IPR006063">
    <property type="entry name" value="HisA_bact_arch"/>
</dbReference>
<dbReference type="InterPro" id="IPR044524">
    <property type="entry name" value="Isoase_HisA-like"/>
</dbReference>
<dbReference type="InterPro" id="IPR023016">
    <property type="entry name" value="Isoase_HisA-like_bact"/>
</dbReference>
<dbReference type="InterPro" id="IPR011060">
    <property type="entry name" value="RibuloseP-bd_barrel"/>
</dbReference>
<dbReference type="NCBIfam" id="TIGR00007">
    <property type="entry name" value="1-(5-phosphoribosyl)-5-[(5-phosphoribosylamino)methylideneamino]imidazole-4-carboxamide isomerase"/>
    <property type="match status" value="1"/>
</dbReference>
<dbReference type="PANTHER" id="PTHR43090">
    <property type="entry name" value="1-(5-PHOSPHORIBOSYL)-5-[(5-PHOSPHORIBOSYLAMINO)METHYLIDENEAMINO] IMIDAZOLE-4-CARBOXAMIDE ISOMERASE"/>
    <property type="match status" value="1"/>
</dbReference>
<dbReference type="PANTHER" id="PTHR43090:SF2">
    <property type="entry name" value="1-(5-PHOSPHORIBOSYL)-5-[(5-PHOSPHORIBOSYLAMINO)METHYLIDENEAMINO] IMIDAZOLE-4-CARBOXAMIDE ISOMERASE"/>
    <property type="match status" value="1"/>
</dbReference>
<dbReference type="Pfam" id="PF00977">
    <property type="entry name" value="His_biosynth"/>
    <property type="match status" value="1"/>
</dbReference>
<dbReference type="SUPFAM" id="SSF51366">
    <property type="entry name" value="Ribulose-phoshate binding barrel"/>
    <property type="match status" value="1"/>
</dbReference>
<accession>P44435</accession>